<organism>
    <name type="scientific">Lactobacillus helveticus (strain DPC 4571)</name>
    <dbReference type="NCBI Taxonomy" id="405566"/>
    <lineage>
        <taxon>Bacteria</taxon>
        <taxon>Bacillati</taxon>
        <taxon>Bacillota</taxon>
        <taxon>Bacilli</taxon>
        <taxon>Lactobacillales</taxon>
        <taxon>Lactobacillaceae</taxon>
        <taxon>Lactobacillus</taxon>
    </lineage>
</organism>
<keyword id="KW-0067">ATP-binding</keyword>
<keyword id="KW-0418">Kinase</keyword>
<keyword id="KW-0545">Nucleotide biosynthesis</keyword>
<keyword id="KW-0547">Nucleotide-binding</keyword>
<keyword id="KW-0808">Transferase</keyword>
<comment type="function">
    <text evidence="1">Phosphorylation of dTMP to form dTDP in both de novo and salvage pathways of dTTP synthesis.</text>
</comment>
<comment type="catalytic activity">
    <reaction evidence="1">
        <text>dTMP + ATP = dTDP + ADP</text>
        <dbReference type="Rhea" id="RHEA:13517"/>
        <dbReference type="ChEBI" id="CHEBI:30616"/>
        <dbReference type="ChEBI" id="CHEBI:58369"/>
        <dbReference type="ChEBI" id="CHEBI:63528"/>
        <dbReference type="ChEBI" id="CHEBI:456216"/>
        <dbReference type="EC" id="2.7.4.9"/>
    </reaction>
</comment>
<comment type="similarity">
    <text evidence="1">Belongs to the thymidylate kinase family.</text>
</comment>
<evidence type="ECO:0000255" key="1">
    <source>
        <dbReference type="HAMAP-Rule" id="MF_00165"/>
    </source>
</evidence>
<sequence>MRGYFVSFEGPDGAGKSTVLKEVLDQIGPKLKPQYLVTREPGGSKIAEKIRDIILDPANDKMDAKTEALLYAAARSQHVEEIIRPALSEGKIVFSDRFVDSSLAYQGEGRDLGIEEVKQINDFATGKLDPDLTFFLDIAPEIGLSRIQKLRPGQEDRLEQENIAFHKKVYNGFLKVKDLYPDRFVTIDATQPIEDVVNQVIATLEKRLPEIF</sequence>
<accession>A8YTF9</accession>
<protein>
    <recommendedName>
        <fullName evidence="1">Thymidylate kinase</fullName>
        <ecNumber evidence="1">2.7.4.9</ecNumber>
    </recommendedName>
    <alternativeName>
        <fullName evidence="1">dTMP kinase</fullName>
    </alternativeName>
</protein>
<name>KTHY_LACH4</name>
<feature type="chain" id="PRO_1000071559" description="Thymidylate kinase">
    <location>
        <begin position="1"/>
        <end position="212"/>
    </location>
</feature>
<feature type="binding site" evidence="1">
    <location>
        <begin position="10"/>
        <end position="17"/>
    </location>
    <ligand>
        <name>ATP</name>
        <dbReference type="ChEBI" id="CHEBI:30616"/>
    </ligand>
</feature>
<reference key="1">
    <citation type="journal article" date="2008" name="J. Bacteriol.">
        <title>Genome sequence of Lactobacillus helveticus: an organism distinguished by selective gene loss and IS element expansion.</title>
        <authorList>
            <person name="Callanan M."/>
            <person name="Kaleta P."/>
            <person name="O'Callaghan J."/>
            <person name="O'Sullivan O."/>
            <person name="Jordan K."/>
            <person name="McAuliffe O."/>
            <person name="Sangrador-Vegas A."/>
            <person name="Slattery L."/>
            <person name="Fitzgerald G.F."/>
            <person name="Beresford T."/>
            <person name="Ross R.P."/>
        </authorList>
    </citation>
    <scope>NUCLEOTIDE SEQUENCE [LARGE SCALE GENOMIC DNA]</scope>
    <source>
        <strain>DPC 4571</strain>
    </source>
</reference>
<proteinExistence type="inferred from homology"/>
<gene>
    <name evidence="1" type="primary">tmk</name>
    <name type="ordered locus">lhv_0404</name>
</gene>
<dbReference type="EC" id="2.7.4.9" evidence="1"/>
<dbReference type="EMBL" id="CP000517">
    <property type="protein sequence ID" value="ABX26615.1"/>
    <property type="molecule type" value="Genomic_DNA"/>
</dbReference>
<dbReference type="RefSeq" id="WP_003631536.1">
    <property type="nucleotide sequence ID" value="NC_010080.1"/>
</dbReference>
<dbReference type="SMR" id="A8YTF9"/>
<dbReference type="KEGG" id="lhe:lhv_0404"/>
<dbReference type="eggNOG" id="COG0125">
    <property type="taxonomic scope" value="Bacteria"/>
</dbReference>
<dbReference type="HOGENOM" id="CLU_049131_0_2_9"/>
<dbReference type="Proteomes" id="UP000000790">
    <property type="component" value="Chromosome"/>
</dbReference>
<dbReference type="GO" id="GO:0005829">
    <property type="term" value="C:cytosol"/>
    <property type="evidence" value="ECO:0007669"/>
    <property type="project" value="TreeGrafter"/>
</dbReference>
<dbReference type="GO" id="GO:0005524">
    <property type="term" value="F:ATP binding"/>
    <property type="evidence" value="ECO:0007669"/>
    <property type="project" value="UniProtKB-UniRule"/>
</dbReference>
<dbReference type="GO" id="GO:0004798">
    <property type="term" value="F:dTMP kinase activity"/>
    <property type="evidence" value="ECO:0007669"/>
    <property type="project" value="UniProtKB-UniRule"/>
</dbReference>
<dbReference type="GO" id="GO:0006233">
    <property type="term" value="P:dTDP biosynthetic process"/>
    <property type="evidence" value="ECO:0007669"/>
    <property type="project" value="InterPro"/>
</dbReference>
<dbReference type="GO" id="GO:0006235">
    <property type="term" value="P:dTTP biosynthetic process"/>
    <property type="evidence" value="ECO:0007669"/>
    <property type="project" value="UniProtKB-UniRule"/>
</dbReference>
<dbReference type="GO" id="GO:0006227">
    <property type="term" value="P:dUDP biosynthetic process"/>
    <property type="evidence" value="ECO:0007669"/>
    <property type="project" value="TreeGrafter"/>
</dbReference>
<dbReference type="CDD" id="cd01672">
    <property type="entry name" value="TMPK"/>
    <property type="match status" value="1"/>
</dbReference>
<dbReference type="FunFam" id="3.40.50.300:FF:000225">
    <property type="entry name" value="Thymidylate kinase"/>
    <property type="match status" value="1"/>
</dbReference>
<dbReference type="Gene3D" id="3.40.50.300">
    <property type="entry name" value="P-loop containing nucleotide triphosphate hydrolases"/>
    <property type="match status" value="1"/>
</dbReference>
<dbReference type="HAMAP" id="MF_00165">
    <property type="entry name" value="Thymidylate_kinase"/>
    <property type="match status" value="1"/>
</dbReference>
<dbReference type="InterPro" id="IPR027417">
    <property type="entry name" value="P-loop_NTPase"/>
</dbReference>
<dbReference type="InterPro" id="IPR039430">
    <property type="entry name" value="Thymidylate_kin-like_dom"/>
</dbReference>
<dbReference type="InterPro" id="IPR018094">
    <property type="entry name" value="Thymidylate_kinase"/>
</dbReference>
<dbReference type="NCBIfam" id="TIGR00041">
    <property type="entry name" value="DTMP_kinase"/>
    <property type="match status" value="1"/>
</dbReference>
<dbReference type="PANTHER" id="PTHR10344">
    <property type="entry name" value="THYMIDYLATE KINASE"/>
    <property type="match status" value="1"/>
</dbReference>
<dbReference type="PANTHER" id="PTHR10344:SF4">
    <property type="entry name" value="UMP-CMP KINASE 2, MITOCHONDRIAL"/>
    <property type="match status" value="1"/>
</dbReference>
<dbReference type="Pfam" id="PF02223">
    <property type="entry name" value="Thymidylate_kin"/>
    <property type="match status" value="1"/>
</dbReference>
<dbReference type="SUPFAM" id="SSF52540">
    <property type="entry name" value="P-loop containing nucleoside triphosphate hydrolases"/>
    <property type="match status" value="1"/>
</dbReference>